<comment type="function">
    <text evidence="1">Growth factor active in angiogenesis and endothelial cell growth, stimulating their proliferation and migration. It binds to the receptor FLT1/VEGFR-1. Also promotes cell tumor growth (By similarity).</text>
</comment>
<comment type="subunit">
    <text evidence="1">Antiparallel homodimer; disulfide-linked. Also found as heterodimer with VEGFA/VEGF (By similarity).</text>
</comment>
<comment type="subcellular location">
    <subcellularLocation>
        <location evidence="1">Secreted</location>
    </subcellularLocation>
</comment>
<comment type="similarity">
    <text evidence="4">Belongs to the PDGF/VEGF growth factor family.</text>
</comment>
<proteinExistence type="evidence at transcript level"/>
<keyword id="KW-0037">Angiogenesis</keyword>
<keyword id="KW-0217">Developmental protein</keyword>
<keyword id="KW-0221">Differentiation</keyword>
<keyword id="KW-1015">Disulfide bond</keyword>
<keyword id="KW-0325">Glycoprotein</keyword>
<keyword id="KW-0339">Growth factor</keyword>
<keyword id="KW-0497">Mitogen</keyword>
<keyword id="KW-1185">Reference proteome</keyword>
<keyword id="KW-0964">Secreted</keyword>
<keyword id="KW-0732">Signal</keyword>
<name>PLGF_MOUSE</name>
<gene>
    <name type="primary">Pgf</name>
    <name type="synonym">Plgf</name>
</gene>
<feature type="signal peptide" evidence="1">
    <location>
        <begin position="1"/>
        <end position="18"/>
    </location>
</feature>
<feature type="chain" id="PRO_0000023421" description="Placenta growth factor">
    <location>
        <begin position="19"/>
        <end position="158"/>
    </location>
</feature>
<feature type="region of interest" description="Disordered" evidence="3">
    <location>
        <begin position="136"/>
        <end position="158"/>
    </location>
</feature>
<feature type="compositionally biased region" description="Basic residues" evidence="3">
    <location>
        <begin position="137"/>
        <end position="149"/>
    </location>
</feature>
<feature type="glycosylation site" description="N-linked (GlcNAc...) asparagine" evidence="2">
    <location>
        <position position="29"/>
    </location>
</feature>
<feature type="glycosylation site" description="N-linked (GlcNAc...) asparagine" evidence="2">
    <location>
        <position position="30"/>
    </location>
</feature>
<feature type="glycosylation site" description="N-linked (GlcNAc...) asparagine" evidence="2">
    <location>
        <position position="97"/>
    </location>
</feature>
<feature type="disulfide bond" evidence="1">
    <location>
        <begin position="48"/>
        <end position="90"/>
    </location>
</feature>
<feature type="disulfide bond" description="Interchain" evidence="1">
    <location>
        <position position="73"/>
    </location>
</feature>
<feature type="disulfide bond" evidence="1">
    <location>
        <begin position="79"/>
        <end position="125"/>
    </location>
</feature>
<feature type="disulfide bond" description="Interchain" evidence="1">
    <location>
        <position position="82"/>
    </location>
</feature>
<feature type="disulfide bond" evidence="1">
    <location>
        <begin position="83"/>
        <end position="127"/>
    </location>
</feature>
<accession>P49764</accession>
<reference key="1">
    <citation type="journal article" date="1996" name="Mamm. Genome">
        <title>The placenta growth factor gene of the mouse.</title>
        <authorList>
            <person name="Dipalma T."/>
            <person name="Tucci M."/>
            <person name="Russo G."/>
            <person name="Maglione D."/>
            <person name="Lago C.T."/>
            <person name="Romano A."/>
            <person name="Saccone S."/>
            <person name="della Valle G."/>
            <person name="de Gregorio L."/>
            <person name="Dragani T.A."/>
            <person name="Viglietto G."/>
            <person name="Persico M.G."/>
        </authorList>
    </citation>
    <scope>NUCLEOTIDE SEQUENCE [MRNA]</scope>
    <source>
        <tissue>Heart</tissue>
    </source>
</reference>
<reference key="2">
    <citation type="journal article" date="1997" name="Growth Factors">
        <title>Placenta growth factor and vascular endothelial growth factor are co-expressed during early embryonic development.</title>
        <authorList>
            <person name="Achen M.G."/>
            <person name="Gad J.M."/>
            <person name="Stacker S.A."/>
            <person name="Wilks A.F."/>
        </authorList>
    </citation>
    <scope>NUCLEOTIDE SEQUENCE [MRNA]</scope>
    <source>
        <strain>NIH Swiss</strain>
    </source>
</reference>
<reference key="3">
    <citation type="journal article" date="2004" name="Genome Res.">
        <title>The status, quality, and expansion of the NIH full-length cDNA project: the Mammalian Gene Collection (MGC).</title>
        <authorList>
            <consortium name="The MGC Project Team"/>
        </authorList>
    </citation>
    <scope>NUCLEOTIDE SEQUENCE [LARGE SCALE MRNA]</scope>
    <source>
        <strain>129</strain>
        <tissue>Mammary gland</tissue>
    </source>
</reference>
<sequence>MLVMKLFTCFLQVLAGLAVHSQGALSAGNNSTEVEVVPFNEVWGRSYCRPMEKLVYILDEYPDEVSHIFSPSCVLLSRCSGCCGDEGLHCVPIKTANITMQILKIPPNRDPHFYVEMTFSQDVLCECRPILETTKAERRKTKGKRKRSRNSQTEEPHP</sequence>
<protein>
    <recommendedName>
        <fullName>Placenta growth factor</fullName>
        <shortName>PlGF</shortName>
    </recommendedName>
</protein>
<evidence type="ECO:0000250" key="1"/>
<evidence type="ECO:0000255" key="2"/>
<evidence type="ECO:0000256" key="3">
    <source>
        <dbReference type="SAM" id="MobiDB-lite"/>
    </source>
</evidence>
<evidence type="ECO:0000305" key="4"/>
<organism>
    <name type="scientific">Mus musculus</name>
    <name type="common">Mouse</name>
    <dbReference type="NCBI Taxonomy" id="10090"/>
    <lineage>
        <taxon>Eukaryota</taxon>
        <taxon>Metazoa</taxon>
        <taxon>Chordata</taxon>
        <taxon>Craniata</taxon>
        <taxon>Vertebrata</taxon>
        <taxon>Euteleostomi</taxon>
        <taxon>Mammalia</taxon>
        <taxon>Eutheria</taxon>
        <taxon>Euarchontoglires</taxon>
        <taxon>Glires</taxon>
        <taxon>Rodentia</taxon>
        <taxon>Myomorpha</taxon>
        <taxon>Muroidea</taxon>
        <taxon>Muridae</taxon>
        <taxon>Murinae</taxon>
        <taxon>Mus</taxon>
        <taxon>Mus</taxon>
    </lineage>
</organism>
<dbReference type="EMBL" id="X80171">
    <property type="protein sequence ID" value="CAA56453.1"/>
    <property type="molecule type" value="mRNA"/>
</dbReference>
<dbReference type="EMBL" id="X96793">
    <property type="protein sequence ID" value="CAA65587.1"/>
    <property type="molecule type" value="mRNA"/>
</dbReference>
<dbReference type="EMBL" id="BC016567">
    <property type="protein sequence ID" value="AAH16567.1"/>
    <property type="molecule type" value="mRNA"/>
</dbReference>
<dbReference type="CCDS" id="CCDS49115.1"/>
<dbReference type="RefSeq" id="NP_032853.1">
    <property type="nucleotide sequence ID" value="NM_008827.3"/>
</dbReference>
<dbReference type="SMR" id="P49764"/>
<dbReference type="FunCoup" id="P49764">
    <property type="interactions" value="1139"/>
</dbReference>
<dbReference type="IntAct" id="P49764">
    <property type="interactions" value="1"/>
</dbReference>
<dbReference type="STRING" id="10090.ENSMUSP00000004913"/>
<dbReference type="BindingDB" id="P49764"/>
<dbReference type="ChEMBL" id="CHEMBL1697670"/>
<dbReference type="GlyCosmos" id="P49764">
    <property type="glycosylation" value="3 sites, No reported glycans"/>
</dbReference>
<dbReference type="GlyGen" id="P49764">
    <property type="glycosylation" value="3 sites, 1 N-linked glycan (1 site)"/>
</dbReference>
<dbReference type="PhosphoSitePlus" id="P49764"/>
<dbReference type="PaxDb" id="10090-ENSMUSP00000004913"/>
<dbReference type="PeptideAtlas" id="P49764"/>
<dbReference type="ProteomicsDB" id="289681"/>
<dbReference type="Antibodypedia" id="12927">
    <property type="antibodies" value="973 antibodies from 44 providers"/>
</dbReference>
<dbReference type="DNASU" id="18654"/>
<dbReference type="Ensembl" id="ENSMUST00000004913.7">
    <property type="protein sequence ID" value="ENSMUSP00000004913.7"/>
    <property type="gene ID" value="ENSMUSG00000004791.8"/>
</dbReference>
<dbReference type="GeneID" id="18654"/>
<dbReference type="KEGG" id="mmu:18654"/>
<dbReference type="UCSC" id="uc007ogq.2">
    <property type="organism name" value="mouse"/>
</dbReference>
<dbReference type="AGR" id="MGI:105095"/>
<dbReference type="CTD" id="5228"/>
<dbReference type="MGI" id="MGI:105095">
    <property type="gene designation" value="Pgf"/>
</dbReference>
<dbReference type="VEuPathDB" id="HostDB:ENSMUSG00000004791"/>
<dbReference type="eggNOG" id="ENOG502S2DE">
    <property type="taxonomic scope" value="Eukaryota"/>
</dbReference>
<dbReference type="GeneTree" id="ENSGT00940000160164"/>
<dbReference type="HOGENOM" id="CLU_042996_3_0_1"/>
<dbReference type="InParanoid" id="P49764"/>
<dbReference type="OMA" id="HKSCECR"/>
<dbReference type="OrthoDB" id="34528at9989"/>
<dbReference type="PhylomeDB" id="P49764"/>
<dbReference type="TreeFam" id="TF319554"/>
<dbReference type="Reactome" id="R-MMU-194313">
    <property type="pathway name" value="VEGF ligand-receptor interactions"/>
</dbReference>
<dbReference type="Reactome" id="R-MMU-195399">
    <property type="pathway name" value="VEGF binds to VEGFR leading to receptor dimerization"/>
</dbReference>
<dbReference type="BioGRID-ORCS" id="18654">
    <property type="hits" value="2 hits in 79 CRISPR screens"/>
</dbReference>
<dbReference type="ChiTaRS" id="Pgf">
    <property type="organism name" value="mouse"/>
</dbReference>
<dbReference type="PRO" id="PR:P49764"/>
<dbReference type="Proteomes" id="UP000000589">
    <property type="component" value="Chromosome 12"/>
</dbReference>
<dbReference type="RNAct" id="P49764">
    <property type="molecule type" value="protein"/>
</dbReference>
<dbReference type="Bgee" id="ENSMUSG00000004791">
    <property type="expression patterns" value="Expressed in decidua and 145 other cell types or tissues"/>
</dbReference>
<dbReference type="ExpressionAtlas" id="P49764">
    <property type="expression patterns" value="baseline and differential"/>
</dbReference>
<dbReference type="GO" id="GO:0005576">
    <property type="term" value="C:extracellular region"/>
    <property type="evidence" value="ECO:0000266"/>
    <property type="project" value="MGI"/>
</dbReference>
<dbReference type="GO" id="GO:0005615">
    <property type="term" value="C:extracellular space"/>
    <property type="evidence" value="ECO:0000314"/>
    <property type="project" value="MGI"/>
</dbReference>
<dbReference type="GO" id="GO:0016020">
    <property type="term" value="C:membrane"/>
    <property type="evidence" value="ECO:0007669"/>
    <property type="project" value="InterPro"/>
</dbReference>
<dbReference type="GO" id="GO:0008083">
    <property type="term" value="F:growth factor activity"/>
    <property type="evidence" value="ECO:0000250"/>
    <property type="project" value="UniProtKB"/>
</dbReference>
<dbReference type="GO" id="GO:0001525">
    <property type="term" value="P:angiogenesis"/>
    <property type="evidence" value="ECO:0007669"/>
    <property type="project" value="UniProtKB-KW"/>
</dbReference>
<dbReference type="GO" id="GO:0001658">
    <property type="term" value="P:branching involved in ureteric bud morphogenesis"/>
    <property type="evidence" value="ECO:0000314"/>
    <property type="project" value="MGI"/>
</dbReference>
<dbReference type="GO" id="GO:0030154">
    <property type="term" value="P:cell differentiation"/>
    <property type="evidence" value="ECO:0007669"/>
    <property type="project" value="UniProtKB-KW"/>
</dbReference>
<dbReference type="GO" id="GO:0010467">
    <property type="term" value="P:gene expression"/>
    <property type="evidence" value="ECO:0000315"/>
    <property type="project" value="MGI"/>
</dbReference>
<dbReference type="GO" id="GO:0005977">
    <property type="term" value="P:glycogen metabolic process"/>
    <property type="evidence" value="ECO:0000315"/>
    <property type="project" value="MGI"/>
</dbReference>
<dbReference type="GO" id="GO:0001890">
    <property type="term" value="P:placenta development"/>
    <property type="evidence" value="ECO:0000315"/>
    <property type="project" value="MGI"/>
</dbReference>
<dbReference type="GO" id="GO:0051781">
    <property type="term" value="P:positive regulation of cell division"/>
    <property type="evidence" value="ECO:0007669"/>
    <property type="project" value="UniProtKB-KW"/>
</dbReference>
<dbReference type="GO" id="GO:0008284">
    <property type="term" value="P:positive regulation of cell population proliferation"/>
    <property type="evidence" value="ECO:0000250"/>
    <property type="project" value="UniProtKB"/>
</dbReference>
<dbReference type="GO" id="GO:0008217">
    <property type="term" value="P:regulation of blood pressure"/>
    <property type="evidence" value="ECO:0000315"/>
    <property type="project" value="MGI"/>
</dbReference>
<dbReference type="GO" id="GO:0060688">
    <property type="term" value="P:regulation of morphogenesis of a branching structure"/>
    <property type="evidence" value="ECO:0000314"/>
    <property type="project" value="MGI"/>
</dbReference>
<dbReference type="CDD" id="cd00135">
    <property type="entry name" value="PDGF"/>
    <property type="match status" value="1"/>
</dbReference>
<dbReference type="FunFam" id="2.10.90.10:FF:000055">
    <property type="entry name" value="Placenta growth factor"/>
    <property type="match status" value="1"/>
</dbReference>
<dbReference type="Gene3D" id="2.10.90.10">
    <property type="entry name" value="Cystine-knot cytokines"/>
    <property type="match status" value="1"/>
</dbReference>
<dbReference type="InterPro" id="IPR029034">
    <property type="entry name" value="Cystine-knot_cytokine"/>
</dbReference>
<dbReference type="InterPro" id="IPR023581">
    <property type="entry name" value="PD_growth_factor_CS"/>
</dbReference>
<dbReference type="InterPro" id="IPR000072">
    <property type="entry name" value="PDGF/VEGF_dom"/>
</dbReference>
<dbReference type="InterPro" id="IPR050507">
    <property type="entry name" value="PDGF/VEGF_growth_factor"/>
</dbReference>
<dbReference type="PANTHER" id="PTHR12025:SF9">
    <property type="entry name" value="PLACENTA GROWTH FACTOR"/>
    <property type="match status" value="1"/>
</dbReference>
<dbReference type="PANTHER" id="PTHR12025">
    <property type="entry name" value="VASCULAR ENDOTHELIAL GROWTH FACTOR"/>
    <property type="match status" value="1"/>
</dbReference>
<dbReference type="Pfam" id="PF00341">
    <property type="entry name" value="PDGF"/>
    <property type="match status" value="1"/>
</dbReference>
<dbReference type="SMART" id="SM00141">
    <property type="entry name" value="PDGF"/>
    <property type="match status" value="1"/>
</dbReference>
<dbReference type="SUPFAM" id="SSF57501">
    <property type="entry name" value="Cystine-knot cytokines"/>
    <property type="match status" value="1"/>
</dbReference>
<dbReference type="PROSITE" id="PS00249">
    <property type="entry name" value="PDGF_1"/>
    <property type="match status" value="1"/>
</dbReference>
<dbReference type="PROSITE" id="PS50278">
    <property type="entry name" value="PDGF_2"/>
    <property type="match status" value="1"/>
</dbReference>